<dbReference type="EMBL" id="AJ222587">
    <property type="protein sequence ID" value="CAA10877.1"/>
    <property type="molecule type" value="Genomic_DNA"/>
</dbReference>
<dbReference type="EMBL" id="AL009126">
    <property type="protein sequence ID" value="CAB13288.1"/>
    <property type="molecule type" value="Genomic_DNA"/>
</dbReference>
<dbReference type="PIR" id="C69866">
    <property type="entry name" value="C69866"/>
</dbReference>
<dbReference type="RefSeq" id="WP_003232386.1">
    <property type="nucleotide sequence ID" value="NZ_OZ025638.1"/>
</dbReference>
<dbReference type="SMR" id="O34737"/>
<dbReference type="FunCoup" id="O34737">
    <property type="interactions" value="24"/>
</dbReference>
<dbReference type="STRING" id="224308.BSU14150"/>
<dbReference type="PaxDb" id="224308-BSU14150"/>
<dbReference type="EnsemblBacteria" id="CAB13288">
    <property type="protein sequence ID" value="CAB13288"/>
    <property type="gene ID" value="BSU_14150"/>
</dbReference>
<dbReference type="GeneID" id="939194"/>
<dbReference type="KEGG" id="bsu:BSU14150"/>
<dbReference type="PATRIC" id="fig|224308.179.peg.1544"/>
<dbReference type="eggNOG" id="COG0716">
    <property type="taxonomic scope" value="Bacteria"/>
</dbReference>
<dbReference type="InParanoid" id="O34737"/>
<dbReference type="OrthoDB" id="9790745at2"/>
<dbReference type="PhylomeDB" id="O34737"/>
<dbReference type="BioCyc" id="BSUB:BSU14150-MONOMER"/>
<dbReference type="Proteomes" id="UP000001570">
    <property type="component" value="Chromosome"/>
</dbReference>
<dbReference type="GO" id="GO:0010181">
    <property type="term" value="F:FMN binding"/>
    <property type="evidence" value="ECO:0007669"/>
    <property type="project" value="InterPro"/>
</dbReference>
<dbReference type="GO" id="GO:0016651">
    <property type="term" value="F:oxidoreductase activity, acting on NAD(P)H"/>
    <property type="evidence" value="ECO:0007669"/>
    <property type="project" value="UniProtKB-ARBA"/>
</dbReference>
<dbReference type="Gene3D" id="3.40.50.360">
    <property type="match status" value="1"/>
</dbReference>
<dbReference type="InterPro" id="IPR010087">
    <property type="entry name" value="Flav_short"/>
</dbReference>
<dbReference type="InterPro" id="IPR001094">
    <property type="entry name" value="Flavdoxin-like"/>
</dbReference>
<dbReference type="InterPro" id="IPR050619">
    <property type="entry name" value="Flavodoxin"/>
</dbReference>
<dbReference type="InterPro" id="IPR008254">
    <property type="entry name" value="Flavodoxin/NO_synth"/>
</dbReference>
<dbReference type="InterPro" id="IPR029039">
    <property type="entry name" value="Flavoprotein-like_sf"/>
</dbReference>
<dbReference type="NCBIfam" id="TIGR01753">
    <property type="entry name" value="flav_short"/>
    <property type="match status" value="1"/>
</dbReference>
<dbReference type="NCBIfam" id="NF005216">
    <property type="entry name" value="PRK06703.1"/>
    <property type="match status" value="1"/>
</dbReference>
<dbReference type="NCBIfam" id="NF005246">
    <property type="entry name" value="PRK06756.1"/>
    <property type="match status" value="1"/>
</dbReference>
<dbReference type="PANTHER" id="PTHR42809:SF1">
    <property type="entry name" value="FLAVODOXIN 1"/>
    <property type="match status" value="1"/>
</dbReference>
<dbReference type="PANTHER" id="PTHR42809">
    <property type="entry name" value="FLAVODOXIN 2"/>
    <property type="match status" value="1"/>
</dbReference>
<dbReference type="Pfam" id="PF00258">
    <property type="entry name" value="Flavodoxin_1"/>
    <property type="match status" value="1"/>
</dbReference>
<dbReference type="PRINTS" id="PR00369">
    <property type="entry name" value="FLAVODOXIN"/>
</dbReference>
<dbReference type="SUPFAM" id="SSF52218">
    <property type="entry name" value="Flavoproteins"/>
    <property type="match status" value="1"/>
</dbReference>
<dbReference type="PROSITE" id="PS50902">
    <property type="entry name" value="FLAVODOXIN_LIKE"/>
    <property type="match status" value="1"/>
</dbReference>
<gene>
    <name type="primary">ykuN</name>
    <name type="ordered locus">BSU14150</name>
</gene>
<protein>
    <recommendedName>
        <fullName>Probable flavodoxin 1</fullName>
    </recommendedName>
</protein>
<keyword id="KW-0249">Electron transport</keyword>
<keyword id="KW-0285">Flavoprotein</keyword>
<keyword id="KW-0288">FMN</keyword>
<keyword id="KW-1185">Reference proteome</keyword>
<keyword id="KW-0813">Transport</keyword>
<reference key="1">
    <citation type="submission" date="1997-11" db="EMBL/GenBank/DDBJ databases">
        <authorList>
            <person name="Scanlan E."/>
            <person name="Devine K.M."/>
        </authorList>
    </citation>
    <scope>NUCLEOTIDE SEQUENCE [GENOMIC DNA]</scope>
    <source>
        <strain>168</strain>
    </source>
</reference>
<reference key="2">
    <citation type="journal article" date="1997" name="Nature">
        <title>The complete genome sequence of the Gram-positive bacterium Bacillus subtilis.</title>
        <authorList>
            <person name="Kunst F."/>
            <person name="Ogasawara N."/>
            <person name="Moszer I."/>
            <person name="Albertini A.M."/>
            <person name="Alloni G."/>
            <person name="Azevedo V."/>
            <person name="Bertero M.G."/>
            <person name="Bessieres P."/>
            <person name="Bolotin A."/>
            <person name="Borchert S."/>
            <person name="Borriss R."/>
            <person name="Boursier L."/>
            <person name="Brans A."/>
            <person name="Braun M."/>
            <person name="Brignell S.C."/>
            <person name="Bron S."/>
            <person name="Brouillet S."/>
            <person name="Bruschi C.V."/>
            <person name="Caldwell B."/>
            <person name="Capuano V."/>
            <person name="Carter N.M."/>
            <person name="Choi S.-K."/>
            <person name="Codani J.-J."/>
            <person name="Connerton I.F."/>
            <person name="Cummings N.J."/>
            <person name="Daniel R.A."/>
            <person name="Denizot F."/>
            <person name="Devine K.M."/>
            <person name="Duesterhoeft A."/>
            <person name="Ehrlich S.D."/>
            <person name="Emmerson P.T."/>
            <person name="Entian K.-D."/>
            <person name="Errington J."/>
            <person name="Fabret C."/>
            <person name="Ferrari E."/>
            <person name="Foulger D."/>
            <person name="Fritz C."/>
            <person name="Fujita M."/>
            <person name="Fujita Y."/>
            <person name="Fuma S."/>
            <person name="Galizzi A."/>
            <person name="Galleron N."/>
            <person name="Ghim S.-Y."/>
            <person name="Glaser P."/>
            <person name="Goffeau A."/>
            <person name="Golightly E.J."/>
            <person name="Grandi G."/>
            <person name="Guiseppi G."/>
            <person name="Guy B.J."/>
            <person name="Haga K."/>
            <person name="Haiech J."/>
            <person name="Harwood C.R."/>
            <person name="Henaut A."/>
            <person name="Hilbert H."/>
            <person name="Holsappel S."/>
            <person name="Hosono S."/>
            <person name="Hullo M.-F."/>
            <person name="Itaya M."/>
            <person name="Jones L.-M."/>
            <person name="Joris B."/>
            <person name="Karamata D."/>
            <person name="Kasahara Y."/>
            <person name="Klaerr-Blanchard M."/>
            <person name="Klein C."/>
            <person name="Kobayashi Y."/>
            <person name="Koetter P."/>
            <person name="Koningstein G."/>
            <person name="Krogh S."/>
            <person name="Kumano M."/>
            <person name="Kurita K."/>
            <person name="Lapidus A."/>
            <person name="Lardinois S."/>
            <person name="Lauber J."/>
            <person name="Lazarevic V."/>
            <person name="Lee S.-M."/>
            <person name="Levine A."/>
            <person name="Liu H."/>
            <person name="Masuda S."/>
            <person name="Mauel C."/>
            <person name="Medigue C."/>
            <person name="Medina N."/>
            <person name="Mellado R.P."/>
            <person name="Mizuno M."/>
            <person name="Moestl D."/>
            <person name="Nakai S."/>
            <person name="Noback M."/>
            <person name="Noone D."/>
            <person name="O'Reilly M."/>
            <person name="Ogawa K."/>
            <person name="Ogiwara A."/>
            <person name="Oudega B."/>
            <person name="Park S.-H."/>
            <person name="Parro V."/>
            <person name="Pohl T.M."/>
            <person name="Portetelle D."/>
            <person name="Porwollik S."/>
            <person name="Prescott A.M."/>
            <person name="Presecan E."/>
            <person name="Pujic P."/>
            <person name="Purnelle B."/>
            <person name="Rapoport G."/>
            <person name="Rey M."/>
            <person name="Reynolds S."/>
            <person name="Rieger M."/>
            <person name="Rivolta C."/>
            <person name="Rocha E."/>
            <person name="Roche B."/>
            <person name="Rose M."/>
            <person name="Sadaie Y."/>
            <person name="Sato T."/>
            <person name="Scanlan E."/>
            <person name="Schleich S."/>
            <person name="Schroeter R."/>
            <person name="Scoffone F."/>
            <person name="Sekiguchi J."/>
            <person name="Sekowska A."/>
            <person name="Seror S.J."/>
            <person name="Serror P."/>
            <person name="Shin B.-S."/>
            <person name="Soldo B."/>
            <person name="Sorokin A."/>
            <person name="Tacconi E."/>
            <person name="Takagi T."/>
            <person name="Takahashi H."/>
            <person name="Takemaru K."/>
            <person name="Takeuchi M."/>
            <person name="Tamakoshi A."/>
            <person name="Tanaka T."/>
            <person name="Terpstra P."/>
            <person name="Tognoni A."/>
            <person name="Tosato V."/>
            <person name="Uchiyama S."/>
            <person name="Vandenbol M."/>
            <person name="Vannier F."/>
            <person name="Vassarotti A."/>
            <person name="Viari A."/>
            <person name="Wambutt R."/>
            <person name="Wedler E."/>
            <person name="Wedler H."/>
            <person name="Weitzenegger T."/>
            <person name="Winters P."/>
            <person name="Wipat A."/>
            <person name="Yamamoto H."/>
            <person name="Yamane K."/>
            <person name="Yasumoto K."/>
            <person name="Yata K."/>
            <person name="Yoshida K."/>
            <person name="Yoshikawa H.-F."/>
            <person name="Zumstein E."/>
            <person name="Yoshikawa H."/>
            <person name="Danchin A."/>
        </authorList>
    </citation>
    <scope>NUCLEOTIDE SEQUENCE [LARGE SCALE GENOMIC DNA]</scope>
    <source>
        <strain>168</strain>
    </source>
</reference>
<evidence type="ECO:0000250" key="1"/>
<evidence type="ECO:0000255" key="2">
    <source>
        <dbReference type="PROSITE-ProRule" id="PRU00088"/>
    </source>
</evidence>
<evidence type="ECO:0000305" key="3"/>
<accession>O34737</accession>
<sequence length="158" mass="17793">MAKALITYASMSGNTEDIAFIIKDTLQEYELDIDCVEINDMDASCLTSYDYVLIGTYTWGDGDLPYEAEDFFEEVKQIQLNGLKTACFGSGDYSYPKFCEAVNLFNVMLQEAGAAVYQETLKIELAPETDEDVESCRAFARGFLAWADYMNKEKIHVS</sequence>
<name>FLAV_BACSU</name>
<comment type="function">
    <text evidence="3">Low-potential electron donor to a number of redox enzymes.</text>
</comment>
<comment type="cofactor">
    <cofactor evidence="1">
        <name>FMN</name>
        <dbReference type="ChEBI" id="CHEBI:58210"/>
    </cofactor>
</comment>
<comment type="similarity">
    <text evidence="3">Belongs to the flavodoxin family.</text>
</comment>
<proteinExistence type="inferred from homology"/>
<feature type="chain" id="PRO_0000171607" description="Probable flavodoxin 1">
    <location>
        <begin position="1"/>
        <end position="158"/>
    </location>
</feature>
<feature type="domain" description="Flavodoxin-like" evidence="2">
    <location>
        <begin position="4"/>
        <end position="144"/>
    </location>
</feature>
<organism>
    <name type="scientific">Bacillus subtilis (strain 168)</name>
    <dbReference type="NCBI Taxonomy" id="224308"/>
    <lineage>
        <taxon>Bacteria</taxon>
        <taxon>Bacillati</taxon>
        <taxon>Bacillota</taxon>
        <taxon>Bacilli</taxon>
        <taxon>Bacillales</taxon>
        <taxon>Bacillaceae</taxon>
        <taxon>Bacillus</taxon>
    </lineage>
</organism>